<comment type="function">
    <text evidence="4 5 6 7 9 10 12 14">Cell adhesion molecule that promotes cell-cell adhesion through heterophilic trans-interactions with nectins-like or other nectins, such as trans-interaction with NECTIN2 at Sertoli-spermatid junctions (PubMed:10744716, PubMed:11827984, PubMed:12121624, PubMed:12558799, PubMed:15328010, PubMed:16128743, PubMed:21798896). Trans-interaction with PVR induces activation of CDC42 and RAC small G proteins through common signaling molecules such as SRC and RAP1 (PubMed:16128743). Induces endocytosis-mediated down-regulation of PVR from the cell surface, resulting in reduction of cell movement and proliferation (PubMed:16128743). Involved in axon guidance by promoting contacts between the commissural axons and the floor plate cells (PubMed:15328010). Also involved in the formation of cell-cell junctions, including adherens junctions and synapses (PubMed:11827984). Promotes formation of checkerboard-like cellular pattern of hair cells and supporting cells in the auditory epithelium via heterophilic interaction with NECTIN1: NECTIN1 is present in the membrane of hair cells and associates with NECTIN3 on supporting cells, thereby mediating heterotypic adhesion between these two cell types (PubMed:21798896). Plays a role in the morphology of the ciliary body (PubMed:15728677).</text>
</comment>
<comment type="subunit">
    <text evidence="1 4 5 8 11 12 14">Cis- and trans-homodimer (PubMed:10744716, PubMed:11827984). Can form trans-heterodimers with NECTIN1, NECTIN2, PVR, IGSF4B/Necl-1 and with IGSF4 (PubMed:12826663, PubMed:15741237, PubMed:16128743, PubMed:21798896). Interaction between NECTIN1 and NECTIN3 on the pre- and postsynaptic sites, respectively, initiates the formation of puncta adherentia junctions between axons and dendrites (PubMed:11827984). Interacts (via Cytoplasmic domain) with AFDN, providing a connection with the actin cytoskeleton (By similarity). Binds with low affinity to TIGIT (By similarity).</text>
</comment>
<comment type="subcellular location">
    <subcellularLocation>
        <location evidence="14">Cell membrane</location>
        <topology evidence="2">Single-pass membrane protein</topology>
    </subcellularLocation>
    <subcellularLocation>
        <location evidence="5">Postsynaptic cell membrane</location>
        <topology evidence="2">Single-pass type I membrane protein</topology>
    </subcellularLocation>
    <subcellularLocation>
        <location evidence="9">Cell junction</location>
        <location evidence="9">Adherens junction</location>
    </subcellularLocation>
    <text evidence="14">In the auditory epithelium, specificaly localizes to the apical side of the lateral membranes of supporting cells.</text>
</comment>
<comment type="alternative products">
    <event type="alternative splicing"/>
    <isoform>
        <id>Q9JLB9-1</id>
        <name>1</name>
        <name>Nectin-3 alpha</name>
        <sequence type="displayed"/>
    </isoform>
    <isoform>
        <id>Q9JLB9-2</id>
        <name>2</name>
        <name>Nectin-3 beta</name>
        <sequence type="described" ref="VSP_017437 VSP_017440"/>
    </isoform>
    <isoform>
        <id>Q9JLB9-3</id>
        <name>3</name>
        <name>Nectin-3 gamma</name>
        <sequence type="described" ref="VSP_017438 VSP_017439"/>
    </isoform>
</comment>
<comment type="tissue specificity">
    <text evidence="4 6">Ubiquitous with high expression in testes. Localized in spermatids at Sertoli-spermatid junctions. Expressed in ovarian granulosa cells, but only faintly expressed after ovulation.</text>
</comment>
<comment type="disruption phenotype">
    <text evidence="10 13 14">Mice show an ocular phenotype, microphthalmia, accompanied by a separation of the contact between the pigment and non-pigment cell layers of the ciliary epithelia (PubMed:15728677). Male mice exhibits infertility, suggesting a role in spermatogenesis (PubMed:15728677). In the hippocampus, the formation and the number of adherens junctions at the synapses is impaired, and the trajectory of mossy fiber is abnormal (PubMed:16300961). In the auditory epithelium, impaired formation of the checkerboard-like cellular pattern of hair cells and supporting cells, due to aberrant attachment between hair cells (PubMed:21798896).</text>
</comment>
<comment type="similarity">
    <text evidence="18">Belongs to the nectin family.</text>
</comment>
<feature type="signal peptide" evidence="2">
    <location>
        <begin position="1"/>
        <end position="57"/>
    </location>
</feature>
<feature type="chain" id="PRO_0000226373" description="Nectin-3">
    <location>
        <begin position="58"/>
        <end position="549"/>
    </location>
</feature>
<feature type="topological domain" description="Extracellular" evidence="2">
    <location>
        <begin position="58"/>
        <end position="404"/>
    </location>
</feature>
<feature type="transmembrane region" description="Helical" evidence="2">
    <location>
        <begin position="405"/>
        <end position="425"/>
    </location>
</feature>
<feature type="topological domain" description="Cytoplasmic" evidence="2">
    <location>
        <begin position="426"/>
        <end position="549"/>
    </location>
</feature>
<feature type="domain" description="Ig-like V-type">
    <location>
        <begin position="58"/>
        <end position="165"/>
    </location>
</feature>
<feature type="domain" description="Ig-like C2-type 1">
    <location>
        <begin position="170"/>
        <end position="258"/>
    </location>
</feature>
<feature type="domain" description="Ig-like C2-type 2">
    <location>
        <begin position="269"/>
        <end position="354"/>
    </location>
</feature>
<feature type="glycosylation site" description="N-linked (GlcNAc...) asparagine" evidence="2">
    <location>
        <position position="73"/>
    </location>
</feature>
<feature type="glycosylation site" description="N-linked (GlcNAc...) asparagine" evidence="2">
    <location>
        <position position="83"/>
    </location>
</feature>
<feature type="glycosylation site" description="N-linked (GlcNAc...) asparagine" evidence="2">
    <location>
        <position position="125"/>
    </location>
</feature>
<feature type="glycosylation site" description="N-linked (GlcNAc...) asparagine" evidence="2">
    <location>
        <position position="186"/>
    </location>
</feature>
<feature type="glycosylation site" description="N-linked (GlcNAc...) asparagine" evidence="2">
    <location>
        <position position="222"/>
    </location>
</feature>
<feature type="glycosylation site" description="N-linked (GlcNAc...) asparagine" evidence="2">
    <location>
        <position position="331"/>
    </location>
</feature>
<feature type="disulfide bond" evidence="3">
    <location>
        <begin position="78"/>
        <end position="148"/>
    </location>
</feature>
<feature type="disulfide bond" evidence="3">
    <location>
        <begin position="193"/>
        <end position="246"/>
    </location>
</feature>
<feature type="disulfide bond" evidence="3">
    <location>
        <begin position="291"/>
        <end position="338"/>
    </location>
</feature>
<feature type="splice variant" id="VSP_017437" description="In isoform 2." evidence="15">
    <original>PPTTTTLQPTVQWHSSPADVQDIATEHKKLPFPLSTLATLKDDTIGTIIASVVGGALFLVLVSILAGVFCYRRRRTFRGDYFAKNYIPPSDMQKESQIDVLHQDELDSYPDSVKKENKNPVNNLIRKDYLEEPEKTQWNNVENLTRFERPMDY</original>
    <variation>IPLTQTSSIAVAGAVIGAVLALFIITVFVTVLLTPRKKRPSYLDKVIDLPPTHKPPPVYEERIPSLPQKDLLGQTEHLPLQTQFKEKGAGGLQPSNGPISRRFDYEDESTMQEDGTQRMCPLYSQMCHQDRSPRQHHPRNPERLYINPREHYV</variation>
    <location>
        <begin position="358"/>
        <end position="510"/>
    </location>
</feature>
<feature type="splice variant" id="VSP_017438" description="In isoform 3." evidence="15 16">
    <original>PPTTTTLQPTVQWHSSPADVQDIATEHKKLPFPLSTLATLKDDTIGTIIASVVGGALFLVLVSILAGVFCYRRRRTFRGDY</original>
    <variation>IPLTQTSSIAVAGAVIGAVLALFIITVFVTVLLTPRKKRPSYLDKVIDLPPTHKPPPVYEERIPSLPQKDLLGQVRALEDT</variation>
    <location>
        <begin position="358"/>
        <end position="438"/>
    </location>
</feature>
<feature type="splice variant" id="VSP_017439" description="In isoform 3." evidence="15 16">
    <location>
        <begin position="439"/>
        <end position="549"/>
    </location>
</feature>
<feature type="splice variant" id="VSP_017440" description="In isoform 2." evidence="15">
    <location>
        <begin position="511"/>
        <end position="549"/>
    </location>
</feature>
<feature type="sequence conflict" description="In Ref. 2; BAB27933." evidence="18" ref="2">
    <original>L</original>
    <variation>S</variation>
    <location>
        <position position="181"/>
    </location>
</feature>
<feature type="sequence conflict" description="In Ref. 2; BAB27933." evidence="18" ref="2">
    <original>AA</original>
    <variation>SS</variation>
    <location>
        <begin position="195"/>
        <end position="196"/>
    </location>
</feature>
<feature type="sequence conflict" description="In Ref. 2; BAB27933." evidence="18" ref="2">
    <original>MESSTTSFP</original>
    <variation>REFSTISFL</variation>
    <location>
        <begin position="213"/>
        <end position="221"/>
    </location>
</feature>
<feature type="sequence conflict" description="In Ref. 2; BAB27933." evidence="18" ref="2">
    <original>K</original>
    <variation>E</variation>
    <location>
        <position position="232"/>
    </location>
</feature>
<feature type="strand" evidence="19">
    <location>
        <begin position="64"/>
        <end position="69"/>
    </location>
</feature>
<feature type="strand" evidence="19">
    <location>
        <begin position="74"/>
        <end position="76"/>
    </location>
</feature>
<feature type="strand" evidence="19">
    <location>
        <begin position="83"/>
        <end position="95"/>
    </location>
</feature>
<feature type="strand" evidence="19">
    <location>
        <begin position="98"/>
        <end position="106"/>
    </location>
</feature>
<feature type="turn" evidence="19">
    <location>
        <begin position="107"/>
        <end position="109"/>
    </location>
</feature>
<feature type="strand" evidence="19">
    <location>
        <begin position="110"/>
        <end position="113"/>
    </location>
</feature>
<feature type="helix" evidence="19">
    <location>
        <begin position="115"/>
        <end position="117"/>
    </location>
</feature>
<feature type="strand" evidence="19">
    <location>
        <begin position="120"/>
        <end position="124"/>
    </location>
</feature>
<feature type="strand" evidence="19">
    <location>
        <begin position="133"/>
        <end position="135"/>
    </location>
</feature>
<feature type="helix" evidence="19">
    <location>
        <begin position="140"/>
        <end position="142"/>
    </location>
</feature>
<feature type="strand" evidence="19">
    <location>
        <begin position="144"/>
        <end position="153"/>
    </location>
</feature>
<feature type="strand" evidence="19">
    <location>
        <begin position="156"/>
        <end position="168"/>
    </location>
</feature>
<feature type="strand" evidence="19">
    <location>
        <begin position="171"/>
        <end position="175"/>
    </location>
</feature>
<feature type="strand" evidence="19">
    <location>
        <begin position="188"/>
        <end position="200"/>
    </location>
</feature>
<feature type="strand" evidence="19">
    <location>
        <begin position="203"/>
        <end position="210"/>
    </location>
</feature>
<feature type="strand" evidence="19">
    <location>
        <begin position="212"/>
        <end position="219"/>
    </location>
</feature>
<feature type="strand" evidence="19">
    <location>
        <begin position="225"/>
        <end position="233"/>
    </location>
</feature>
<feature type="helix" evidence="19">
    <location>
        <begin position="237"/>
        <end position="239"/>
    </location>
</feature>
<feature type="strand" evidence="19">
    <location>
        <begin position="243"/>
        <end position="249"/>
    </location>
</feature>
<feature type="strand" evidence="19">
    <location>
        <begin position="257"/>
        <end position="262"/>
    </location>
</feature>
<name>NECT3_MOUSE</name>
<gene>
    <name evidence="17" type="primary">Nectin3</name>
    <name type="synonym">Pvrl3</name>
</gene>
<sequence>MARTPGPAPLCPGGGKAQLSSAFPPAAGLLLPAPTPPPLLLLLIPLLLFSRLCGALAGSIIVEPHVTAVWGKNVSLKCLIEVNETITQISWEKIHGKSTQTVAVHHPQYGFSVQGDYQGRVLFKNYSLNDATITLHNIGFSDSGKYICKAVTFPLGNAQSSTTVTVLVEPTVSLIKGPDSLIDGGNETVAAVCVAATGKPVAQIDWEGDLGEMESSTTSFPNETATIVSQYKLFPTRFARGRRITCVVKHPALEKDIRYSFILDIQYAPEVSVTGYDGNWFVGRKGVNLKCNADANPPPFKSVWSRLDGQWPDGLLASDNTLHFVHPLTVNYSGVYVCKVSNSLGQRSDQKVIYISDPPTTTTLQPTVQWHSSPADVQDIATEHKKLPFPLSTLATLKDDTIGTIIASVVGGALFLVLVSILAGVFCYRRRRTFRGDYFAKNYIPPSDMQKESQIDVLHQDELDSYPDSVKKENKNPVNNLIRKDYLEEPEKTQWNNVENLTRFERPMDYYEDLKMGMKFVSDERYNESEDGLVSHVDGSVISRREWYV</sequence>
<accession>Q9JLB9</accession>
<accession>Q059N7</accession>
<accession>Q9D006</accession>
<accession>Q9JLB7</accession>
<accession>Q9JLB8</accession>
<evidence type="ECO:0000250" key="1">
    <source>
        <dbReference type="UniProtKB" id="Q9NQS3"/>
    </source>
</evidence>
<evidence type="ECO:0000255" key="2"/>
<evidence type="ECO:0000255" key="3">
    <source>
        <dbReference type="PROSITE-ProRule" id="PRU00114"/>
    </source>
</evidence>
<evidence type="ECO:0000269" key="4">
    <source>
    </source>
</evidence>
<evidence type="ECO:0000269" key="5">
    <source>
    </source>
</evidence>
<evidence type="ECO:0000269" key="6">
    <source>
    </source>
</evidence>
<evidence type="ECO:0000269" key="7">
    <source>
    </source>
</evidence>
<evidence type="ECO:0000269" key="8">
    <source>
    </source>
</evidence>
<evidence type="ECO:0000269" key="9">
    <source>
    </source>
</evidence>
<evidence type="ECO:0000269" key="10">
    <source>
    </source>
</evidence>
<evidence type="ECO:0000269" key="11">
    <source>
    </source>
</evidence>
<evidence type="ECO:0000269" key="12">
    <source>
    </source>
</evidence>
<evidence type="ECO:0000269" key="13">
    <source>
    </source>
</evidence>
<evidence type="ECO:0000269" key="14">
    <source>
    </source>
</evidence>
<evidence type="ECO:0000303" key="15">
    <source>
    </source>
</evidence>
<evidence type="ECO:0000303" key="16">
    <source>
    </source>
</evidence>
<evidence type="ECO:0000303" key="17">
    <source>
    </source>
</evidence>
<evidence type="ECO:0000305" key="18"/>
<evidence type="ECO:0007829" key="19">
    <source>
        <dbReference type="PDB" id="5B22"/>
    </source>
</evidence>
<reference key="1">
    <citation type="journal article" date="2000" name="J. Biol. Chem.">
        <title>Nectin-3: a new member of immunoglobulin-like cell adhesion molecules that shows homophilic and heterophilic cell-cell adhesion activities.</title>
        <authorList>
            <person name="Satoh-Horikawa K."/>
            <person name="Nakanishi H."/>
            <person name="Takahashi K."/>
            <person name="Miyahara M."/>
            <person name="Nishimura M."/>
            <person name="Tachibana K."/>
            <person name="Mizoguchi A."/>
            <person name="Takai Y."/>
        </authorList>
    </citation>
    <scope>NUCLEOTIDE SEQUENCE [MRNA] (ISOFORMS 1; 2 AND 3)</scope>
    <scope>SUBUNIT</scope>
    <scope>TISSUE SPECIFICITY</scope>
    <scope>FUNCTION</scope>
</reference>
<reference key="2">
    <citation type="journal article" date="2005" name="Science">
        <title>The transcriptional landscape of the mammalian genome.</title>
        <authorList>
            <person name="Carninci P."/>
            <person name="Kasukawa T."/>
            <person name="Katayama S."/>
            <person name="Gough J."/>
            <person name="Frith M.C."/>
            <person name="Maeda N."/>
            <person name="Oyama R."/>
            <person name="Ravasi T."/>
            <person name="Lenhard B."/>
            <person name="Wells C."/>
            <person name="Kodzius R."/>
            <person name="Shimokawa K."/>
            <person name="Bajic V.B."/>
            <person name="Brenner S.E."/>
            <person name="Batalov S."/>
            <person name="Forrest A.R."/>
            <person name="Zavolan M."/>
            <person name="Davis M.J."/>
            <person name="Wilming L.G."/>
            <person name="Aidinis V."/>
            <person name="Allen J.E."/>
            <person name="Ambesi-Impiombato A."/>
            <person name="Apweiler R."/>
            <person name="Aturaliya R.N."/>
            <person name="Bailey T.L."/>
            <person name="Bansal M."/>
            <person name="Baxter L."/>
            <person name="Beisel K.W."/>
            <person name="Bersano T."/>
            <person name="Bono H."/>
            <person name="Chalk A.M."/>
            <person name="Chiu K.P."/>
            <person name="Choudhary V."/>
            <person name="Christoffels A."/>
            <person name="Clutterbuck D.R."/>
            <person name="Crowe M.L."/>
            <person name="Dalla E."/>
            <person name="Dalrymple B.P."/>
            <person name="de Bono B."/>
            <person name="Della Gatta G."/>
            <person name="di Bernardo D."/>
            <person name="Down T."/>
            <person name="Engstrom P."/>
            <person name="Fagiolini M."/>
            <person name="Faulkner G."/>
            <person name="Fletcher C.F."/>
            <person name="Fukushima T."/>
            <person name="Furuno M."/>
            <person name="Futaki S."/>
            <person name="Gariboldi M."/>
            <person name="Georgii-Hemming P."/>
            <person name="Gingeras T.R."/>
            <person name="Gojobori T."/>
            <person name="Green R.E."/>
            <person name="Gustincich S."/>
            <person name="Harbers M."/>
            <person name="Hayashi Y."/>
            <person name="Hensch T.K."/>
            <person name="Hirokawa N."/>
            <person name="Hill D."/>
            <person name="Huminiecki L."/>
            <person name="Iacono M."/>
            <person name="Ikeo K."/>
            <person name="Iwama A."/>
            <person name="Ishikawa T."/>
            <person name="Jakt M."/>
            <person name="Kanapin A."/>
            <person name="Katoh M."/>
            <person name="Kawasawa Y."/>
            <person name="Kelso J."/>
            <person name="Kitamura H."/>
            <person name="Kitano H."/>
            <person name="Kollias G."/>
            <person name="Krishnan S.P."/>
            <person name="Kruger A."/>
            <person name="Kummerfeld S.K."/>
            <person name="Kurochkin I.V."/>
            <person name="Lareau L.F."/>
            <person name="Lazarevic D."/>
            <person name="Lipovich L."/>
            <person name="Liu J."/>
            <person name="Liuni S."/>
            <person name="McWilliam S."/>
            <person name="Madan Babu M."/>
            <person name="Madera M."/>
            <person name="Marchionni L."/>
            <person name="Matsuda H."/>
            <person name="Matsuzawa S."/>
            <person name="Miki H."/>
            <person name="Mignone F."/>
            <person name="Miyake S."/>
            <person name="Morris K."/>
            <person name="Mottagui-Tabar S."/>
            <person name="Mulder N."/>
            <person name="Nakano N."/>
            <person name="Nakauchi H."/>
            <person name="Ng P."/>
            <person name="Nilsson R."/>
            <person name="Nishiguchi S."/>
            <person name="Nishikawa S."/>
            <person name="Nori F."/>
            <person name="Ohara O."/>
            <person name="Okazaki Y."/>
            <person name="Orlando V."/>
            <person name="Pang K.C."/>
            <person name="Pavan W.J."/>
            <person name="Pavesi G."/>
            <person name="Pesole G."/>
            <person name="Petrovsky N."/>
            <person name="Piazza S."/>
            <person name="Reed J."/>
            <person name="Reid J.F."/>
            <person name="Ring B.Z."/>
            <person name="Ringwald M."/>
            <person name="Rost B."/>
            <person name="Ruan Y."/>
            <person name="Salzberg S.L."/>
            <person name="Sandelin A."/>
            <person name="Schneider C."/>
            <person name="Schoenbach C."/>
            <person name="Sekiguchi K."/>
            <person name="Semple C.A."/>
            <person name="Seno S."/>
            <person name="Sessa L."/>
            <person name="Sheng Y."/>
            <person name="Shibata Y."/>
            <person name="Shimada H."/>
            <person name="Shimada K."/>
            <person name="Silva D."/>
            <person name="Sinclair B."/>
            <person name="Sperling S."/>
            <person name="Stupka E."/>
            <person name="Sugiura K."/>
            <person name="Sultana R."/>
            <person name="Takenaka Y."/>
            <person name="Taki K."/>
            <person name="Tammoja K."/>
            <person name="Tan S.L."/>
            <person name="Tang S."/>
            <person name="Taylor M.S."/>
            <person name="Tegner J."/>
            <person name="Teichmann S.A."/>
            <person name="Ueda H.R."/>
            <person name="van Nimwegen E."/>
            <person name="Verardo R."/>
            <person name="Wei C.L."/>
            <person name="Yagi K."/>
            <person name="Yamanishi H."/>
            <person name="Zabarovsky E."/>
            <person name="Zhu S."/>
            <person name="Zimmer A."/>
            <person name="Hide W."/>
            <person name="Bult C."/>
            <person name="Grimmond S.M."/>
            <person name="Teasdale R.D."/>
            <person name="Liu E.T."/>
            <person name="Brusic V."/>
            <person name="Quackenbush J."/>
            <person name="Wahlestedt C."/>
            <person name="Mattick J.S."/>
            <person name="Hume D.A."/>
            <person name="Kai C."/>
            <person name="Sasaki D."/>
            <person name="Tomaru Y."/>
            <person name="Fukuda S."/>
            <person name="Kanamori-Katayama M."/>
            <person name="Suzuki M."/>
            <person name="Aoki J."/>
            <person name="Arakawa T."/>
            <person name="Iida J."/>
            <person name="Imamura K."/>
            <person name="Itoh M."/>
            <person name="Kato T."/>
            <person name="Kawaji H."/>
            <person name="Kawagashira N."/>
            <person name="Kawashima T."/>
            <person name="Kojima M."/>
            <person name="Kondo S."/>
            <person name="Konno H."/>
            <person name="Nakano K."/>
            <person name="Ninomiya N."/>
            <person name="Nishio T."/>
            <person name="Okada M."/>
            <person name="Plessy C."/>
            <person name="Shibata K."/>
            <person name="Shiraki T."/>
            <person name="Suzuki S."/>
            <person name="Tagami M."/>
            <person name="Waki K."/>
            <person name="Watahiki A."/>
            <person name="Okamura-Oho Y."/>
            <person name="Suzuki H."/>
            <person name="Kawai J."/>
            <person name="Hayashizaki Y."/>
        </authorList>
    </citation>
    <scope>NUCLEOTIDE SEQUENCE [LARGE SCALE MRNA] (ISOFORM 1)</scope>
    <source>
        <strain>C57BL/6J</strain>
        <tissue>Embryo</tissue>
    </source>
</reference>
<reference key="3">
    <citation type="journal article" date="2004" name="Genome Res.">
        <title>The status, quality, and expansion of the NIH full-length cDNA project: the Mammalian Gene Collection (MGC).</title>
        <authorList>
            <consortium name="The MGC Project Team"/>
        </authorList>
    </citation>
    <scope>NUCLEOTIDE SEQUENCE [LARGE SCALE MRNA] (ISOFORM 3)</scope>
    <source>
        <tissue>Brain</tissue>
    </source>
</reference>
<reference key="4">
    <citation type="journal article" date="2002" name="Curr. Biol.">
        <title>Nectin couples cell-cell adhesion and the actin scaffold at heterotypic testicular junctions.</title>
        <authorList>
            <person name="Ozaki-Kuroda K."/>
            <person name="Nakanishi H."/>
            <person name="Ohta H."/>
            <person name="Tanaka H."/>
            <person name="Kurihara H."/>
            <person name="Mueller S."/>
            <person name="Irie K."/>
            <person name="Ikeda W."/>
            <person name="Sakai T."/>
            <person name="Wimmer E."/>
            <person name="Nishimune Y."/>
            <person name="Takai Y."/>
        </authorList>
    </citation>
    <scope>FUNCTION</scope>
    <scope>TISSUE SPECIFICITY</scope>
</reference>
<reference key="5">
    <citation type="journal article" date="2002" name="J. Cell Biol.">
        <title>Nectin: an adhesion molecule involved in formation of synapses.</title>
        <authorList>
            <person name="Mizoguchi A."/>
            <person name="Nakanishi H."/>
            <person name="Kimura K."/>
            <person name="Matsubara K."/>
            <person name="Ozaki-Kuroda K."/>
            <person name="Katata T."/>
            <person name="Honda T."/>
            <person name="Kiyohara Y."/>
            <person name="Heo K."/>
            <person name="Higashi M."/>
            <person name="Tsutsumi T."/>
            <person name="Sonoda S."/>
            <person name="Ide C."/>
            <person name="Takai Y."/>
        </authorList>
    </citation>
    <scope>FUNCTION</scope>
    <scope>SUBUNIT</scope>
    <scope>SUBCELLULAR LOCATION</scope>
</reference>
<reference key="6">
    <citation type="journal article" date="2003" name="Genes Cells">
        <title>Antagonistic and agonistic effects of an extracellular fragment of nectin on formation of E-cadherin-based cell-cell adhesion.</title>
        <authorList>
            <person name="Honda T."/>
            <person name="Shimizu K."/>
            <person name="Kawakatsu T."/>
            <person name="Yasumi M."/>
            <person name="Shingai T."/>
            <person name="Fukuhara A."/>
            <person name="Ozaki-Kuroda K."/>
            <person name="Irie K."/>
            <person name="Nakanishi H."/>
            <person name="Takai Y."/>
        </authorList>
    </citation>
    <scope>FUNCTION</scope>
</reference>
<reference key="7">
    <citation type="journal article" date="2003" name="J. Biol. Chem.">
        <title>Implications of nectin-like molecule-2/IGSF4/RA175/SgIGSF/TSLC1/SynCAM1 in cell-cell adhesion and transmembrane protein localization in epithelial cells.</title>
        <authorList>
            <person name="Shingai T."/>
            <person name="Ikeda W."/>
            <person name="Kakunaga S."/>
            <person name="Morimoto K."/>
            <person name="Takekuni K."/>
            <person name="Itoh S."/>
            <person name="Satoh K."/>
            <person name="Takeuchi M."/>
            <person name="Imai T."/>
            <person name="Monden M."/>
            <person name="Takai Y."/>
        </authorList>
    </citation>
    <scope>INTERACTION WITH IGSF4</scope>
</reference>
<reference key="8">
    <citation type="journal article" date="2004" name="Dev. Biol.">
        <title>Contacts between the commissural axons and the floor plate cells are mediated by nectins.</title>
        <authorList>
            <person name="Okabe N."/>
            <person name="Shimizu K."/>
            <person name="Ozaki-Kuroda K."/>
            <person name="Nakanishi H."/>
            <person name="Morimoto K."/>
            <person name="Takeuchi M."/>
            <person name="Katsumaru H."/>
            <person name="Murakami F."/>
            <person name="Takai Y."/>
        </authorList>
    </citation>
    <scope>FUNCTION</scope>
    <scope>SUBCELLULAR LOCATION</scope>
</reference>
<reference key="9">
    <citation type="journal article" date="2005" name="Cancer Sci.">
        <title>Common signaling pathway is used by the trans-interaction of Necl-5/Tage4/PVR/CD155 and nectin, and of nectin and nectin during the formation of cell-cell adhesion.</title>
        <authorList>
            <person name="Sato T."/>
            <person name="Irie K."/>
            <person name="Okamoto R."/>
            <person name="Ooshio T."/>
            <person name="Fujita N."/>
            <person name="Takai Y."/>
        </authorList>
    </citation>
    <scope>FUNCTION</scope>
    <scope>INTERACTION WITH PVR</scope>
</reference>
<reference key="10">
    <citation type="journal article" date="2005" name="Development">
        <title>Roles of cell-adhesion molecules nectin 1 and nectin 3 in ciliary body development.</title>
        <authorList>
            <person name="Inagaki M."/>
            <person name="Irie K."/>
            <person name="Ishizaki H."/>
            <person name="Tanaka-Okamoto M."/>
            <person name="Morimoto K."/>
            <person name="Inoue E."/>
            <person name="Ohtsuka T."/>
            <person name="Miyoshi J."/>
            <person name="Takai Y."/>
        </authorList>
    </citation>
    <scope>FUNCTION</scope>
    <scope>DISRUPTION PHENOTYPE</scope>
</reference>
<reference key="11">
    <citation type="journal article" date="2005" name="J. Cell Sci.">
        <title>Nectin-like molecule-1/TSLL1/SynCAM3: a neural tissue-specific immunoglobulin-like cell-cell adhesion molecule localizing at non-junctional contact sites of presynaptic nerve terminals, axons and glia cell processes.</title>
        <authorList>
            <person name="Kakunaga S."/>
            <person name="Ikeda W."/>
            <person name="Itoh S."/>
            <person name="Deguchi-Tawarada M."/>
            <person name="Ohtsuka T."/>
            <person name="Mizoguchi A."/>
            <person name="Takai Y."/>
        </authorList>
    </citation>
    <scope>INTERACTION WITH IGSF4B</scope>
</reference>
<reference key="12">
    <citation type="journal article" date="2006" name="Mol. Cell. Neurosci.">
        <title>Involvement of nectins in the formation of puncta adherentia junctions and the mossy fiber trajectory in the mouse hippocampus.</title>
        <authorList>
            <person name="Honda T."/>
            <person name="Sakisaka T."/>
            <person name="Yamada T."/>
            <person name="Kumazawa N."/>
            <person name="Hoshino T."/>
            <person name="Kajita M."/>
            <person name="Kayahara T."/>
            <person name="Ishizaki H."/>
            <person name="Tanaka-Okamoto M."/>
            <person name="Mizoguchi A."/>
            <person name="Manabe T."/>
            <person name="Miyoshi J."/>
            <person name="Takai Y."/>
        </authorList>
    </citation>
    <scope>DISRUPTION PHENOTYPE</scope>
</reference>
<reference key="13">
    <citation type="journal article" date="2007" name="Proc. Natl. Acad. Sci. U.S.A.">
        <title>Large-scale phosphorylation analysis of mouse liver.</title>
        <authorList>
            <person name="Villen J."/>
            <person name="Beausoleil S.A."/>
            <person name="Gerber S.A."/>
            <person name="Gygi S.P."/>
        </authorList>
    </citation>
    <scope>IDENTIFICATION BY MASS SPECTROMETRY [LARGE SCALE ANALYSIS]</scope>
    <source>
        <tissue>Liver</tissue>
    </source>
</reference>
<reference key="14">
    <citation type="journal article" date="2010" name="Cell">
        <title>A tissue-specific atlas of mouse protein phosphorylation and expression.</title>
        <authorList>
            <person name="Huttlin E.L."/>
            <person name="Jedrychowski M.P."/>
            <person name="Elias J.E."/>
            <person name="Goswami T."/>
            <person name="Rad R."/>
            <person name="Beausoleil S.A."/>
            <person name="Villen J."/>
            <person name="Haas W."/>
            <person name="Sowa M.E."/>
            <person name="Gygi S.P."/>
        </authorList>
    </citation>
    <scope>IDENTIFICATION BY MASS SPECTROMETRY [LARGE SCALE ANALYSIS]</scope>
    <source>
        <tissue>Brain</tissue>
        <tissue>Kidney</tissue>
        <tissue>Lung</tissue>
        <tissue>Testis</tissue>
    </source>
</reference>
<reference key="15">
    <citation type="journal article" date="2011" name="Science">
        <title>Nectins establish a checkerboard-like cellular pattern in the auditory epithelium.</title>
        <authorList>
            <person name="Togashi H."/>
            <person name="Kominami K."/>
            <person name="Waseda M."/>
            <person name="Komura H."/>
            <person name="Miyoshi J."/>
            <person name="Takeichi M."/>
            <person name="Takai Y."/>
        </authorList>
    </citation>
    <scope>FUNCTION</scope>
    <scope>INTERACTION WITH NECTIN1</scope>
    <scope>SUBCELLULAR LOCATION</scope>
    <scope>DISRUPTION PHENOTYPE</scope>
</reference>
<proteinExistence type="evidence at protein level"/>
<protein>
    <recommendedName>
        <fullName evidence="17">Nectin-3</fullName>
    </recommendedName>
    <alternativeName>
        <fullName evidence="1">Nectin cell adhesion molecule 3</fullName>
    </alternativeName>
    <alternativeName>
        <fullName>Poliovirus receptor-related protein 3</fullName>
    </alternativeName>
    <cdAntigenName>CD113</cdAntigenName>
</protein>
<keyword id="KW-0002">3D-structure</keyword>
<keyword id="KW-0025">Alternative splicing</keyword>
<keyword id="KW-0130">Cell adhesion</keyword>
<keyword id="KW-0965">Cell junction</keyword>
<keyword id="KW-1003">Cell membrane</keyword>
<keyword id="KW-1015">Disulfide bond</keyword>
<keyword id="KW-0325">Glycoprotein</keyword>
<keyword id="KW-0393">Immunoglobulin domain</keyword>
<keyword id="KW-0472">Membrane</keyword>
<keyword id="KW-0628">Postsynaptic cell membrane</keyword>
<keyword id="KW-1185">Reference proteome</keyword>
<keyword id="KW-0677">Repeat</keyword>
<keyword id="KW-0732">Signal</keyword>
<keyword id="KW-0770">Synapse</keyword>
<keyword id="KW-0812">Transmembrane</keyword>
<keyword id="KW-1133">Transmembrane helix</keyword>
<organism>
    <name type="scientific">Mus musculus</name>
    <name type="common">Mouse</name>
    <dbReference type="NCBI Taxonomy" id="10090"/>
    <lineage>
        <taxon>Eukaryota</taxon>
        <taxon>Metazoa</taxon>
        <taxon>Chordata</taxon>
        <taxon>Craniata</taxon>
        <taxon>Vertebrata</taxon>
        <taxon>Euteleostomi</taxon>
        <taxon>Mammalia</taxon>
        <taxon>Eutheria</taxon>
        <taxon>Euarchontoglires</taxon>
        <taxon>Glires</taxon>
        <taxon>Rodentia</taxon>
        <taxon>Myomorpha</taxon>
        <taxon>Muroidea</taxon>
        <taxon>Muridae</taxon>
        <taxon>Murinae</taxon>
        <taxon>Mus</taxon>
        <taxon>Mus</taxon>
    </lineage>
</organism>
<dbReference type="EMBL" id="AF195833">
    <property type="protein sequence ID" value="AAF63685.1"/>
    <property type="molecule type" value="mRNA"/>
</dbReference>
<dbReference type="EMBL" id="AF195834">
    <property type="protein sequence ID" value="AAF63686.1"/>
    <property type="molecule type" value="mRNA"/>
</dbReference>
<dbReference type="EMBL" id="AF195835">
    <property type="protein sequence ID" value="AAF63687.1"/>
    <property type="molecule type" value="mRNA"/>
</dbReference>
<dbReference type="EMBL" id="AK011949">
    <property type="protein sequence ID" value="BAB27933.1"/>
    <property type="molecule type" value="mRNA"/>
</dbReference>
<dbReference type="EMBL" id="BC125588">
    <property type="protein sequence ID" value="AAI25589.1"/>
    <property type="molecule type" value="mRNA"/>
</dbReference>
<dbReference type="EMBL" id="BC132187">
    <property type="protein sequence ID" value="AAI32188.1"/>
    <property type="molecule type" value="mRNA"/>
</dbReference>
<dbReference type="CCDS" id="CCDS28204.1">
    <molecule id="Q9JLB9-2"/>
</dbReference>
<dbReference type="CCDS" id="CCDS28205.1">
    <molecule id="Q9JLB9-3"/>
</dbReference>
<dbReference type="CCDS" id="CCDS28206.1">
    <molecule id="Q9JLB9-1"/>
</dbReference>
<dbReference type="RefSeq" id="NP_067470.1">
    <molecule id="Q9JLB9-1"/>
    <property type="nucleotide sequence ID" value="NM_021495.4"/>
</dbReference>
<dbReference type="RefSeq" id="NP_067471.1">
    <molecule id="Q9JLB9-2"/>
    <property type="nucleotide sequence ID" value="NM_021496.3"/>
</dbReference>
<dbReference type="RefSeq" id="NP_067472.1">
    <molecule id="Q9JLB9-3"/>
    <property type="nucleotide sequence ID" value="NM_021497.2"/>
</dbReference>
<dbReference type="PDB" id="3AXA">
    <property type="method" value="X-ray"/>
    <property type="resolution" value="2.78 A"/>
    <property type="chains" value="A/B=544-549"/>
</dbReference>
<dbReference type="PDB" id="5B22">
    <property type="method" value="X-ray"/>
    <property type="resolution" value="2.58 A"/>
    <property type="chains" value="A/B=59-266"/>
</dbReference>
<dbReference type="PDBsum" id="3AXA"/>
<dbReference type="PDBsum" id="5B22"/>
<dbReference type="SMR" id="Q9JLB9"/>
<dbReference type="BioGRID" id="208471">
    <property type="interactions" value="3"/>
</dbReference>
<dbReference type="DIP" id="DIP-41729N"/>
<dbReference type="FunCoup" id="Q9JLB9">
    <property type="interactions" value="308"/>
</dbReference>
<dbReference type="IntAct" id="Q9JLB9">
    <property type="interactions" value="2"/>
</dbReference>
<dbReference type="MINT" id="Q9JLB9"/>
<dbReference type="STRING" id="10090.ENSMUSP00000023334"/>
<dbReference type="GlyCosmos" id="Q9JLB9">
    <property type="glycosylation" value="6 sites, No reported glycans"/>
</dbReference>
<dbReference type="GlyGen" id="Q9JLB9">
    <property type="glycosylation" value="8 sites, 4 N-linked glycans (4 sites)"/>
</dbReference>
<dbReference type="iPTMnet" id="Q9JLB9"/>
<dbReference type="PhosphoSitePlus" id="Q9JLB9"/>
<dbReference type="SwissPalm" id="Q9JLB9"/>
<dbReference type="PaxDb" id="10090-ENSMUSP00000023334"/>
<dbReference type="PeptideAtlas" id="Q9JLB9"/>
<dbReference type="ProteomicsDB" id="286174">
    <molecule id="Q9JLB9-1"/>
</dbReference>
<dbReference type="ProteomicsDB" id="286175">
    <molecule id="Q9JLB9-2"/>
</dbReference>
<dbReference type="ProteomicsDB" id="286176">
    <molecule id="Q9JLB9-3"/>
</dbReference>
<dbReference type="Pumba" id="Q9JLB9"/>
<dbReference type="Antibodypedia" id="2646">
    <property type="antibodies" value="362 antibodies from 35 providers"/>
</dbReference>
<dbReference type="DNASU" id="58998"/>
<dbReference type="Ensembl" id="ENSMUST00000023334.15">
    <molecule id="Q9JLB9-1"/>
    <property type="protein sequence ID" value="ENSMUSP00000023334.9"/>
    <property type="gene ID" value="ENSMUSG00000022656.16"/>
</dbReference>
<dbReference type="Ensembl" id="ENSMUST00000023335.13">
    <molecule id="Q9JLB9-2"/>
    <property type="protein sequence ID" value="ENSMUSP00000023335.7"/>
    <property type="gene ID" value="ENSMUSG00000022656.16"/>
</dbReference>
<dbReference type="Ensembl" id="ENSMUST00000096052.9">
    <molecule id="Q9JLB9-3"/>
    <property type="protein sequence ID" value="ENSMUSP00000093757.3"/>
    <property type="gene ID" value="ENSMUSG00000022656.16"/>
</dbReference>
<dbReference type="GeneID" id="58998"/>
<dbReference type="KEGG" id="mmu:58998"/>
<dbReference type="UCSC" id="uc007zji.3">
    <molecule id="Q9JLB9-2"/>
    <property type="organism name" value="mouse"/>
</dbReference>
<dbReference type="UCSC" id="uc007zjj.2">
    <molecule id="Q9JLB9-3"/>
    <property type="organism name" value="mouse"/>
</dbReference>
<dbReference type="UCSC" id="uc007zjk.3">
    <molecule id="Q9JLB9-1"/>
    <property type="organism name" value="mouse"/>
</dbReference>
<dbReference type="AGR" id="MGI:1930171"/>
<dbReference type="CTD" id="25945"/>
<dbReference type="MGI" id="MGI:1930171">
    <property type="gene designation" value="Nectin3"/>
</dbReference>
<dbReference type="VEuPathDB" id="HostDB:ENSMUSG00000022656"/>
<dbReference type="eggNOG" id="ENOG502QTRU">
    <property type="taxonomic scope" value="Eukaryota"/>
</dbReference>
<dbReference type="GeneTree" id="ENSGT00940000156028"/>
<dbReference type="HOGENOM" id="CLU_029618_3_0_1"/>
<dbReference type="InParanoid" id="Q9JLB9"/>
<dbReference type="OMA" id="NEITHQR"/>
<dbReference type="OrthoDB" id="9442762at2759"/>
<dbReference type="PhylomeDB" id="Q9JLB9"/>
<dbReference type="TreeFam" id="TF331051"/>
<dbReference type="Reactome" id="R-MMU-418990">
    <property type="pathway name" value="Adherens junctions interactions"/>
</dbReference>
<dbReference type="Reactome" id="R-MMU-420597">
    <property type="pathway name" value="Nectin/Necl trans heterodimerization"/>
</dbReference>
<dbReference type="BioGRID-ORCS" id="58998">
    <property type="hits" value="2 hits in 78 CRISPR screens"/>
</dbReference>
<dbReference type="ChiTaRS" id="Nectin3">
    <property type="organism name" value="mouse"/>
</dbReference>
<dbReference type="EvolutionaryTrace" id="Q9JLB9"/>
<dbReference type="PRO" id="PR:Q9JLB9"/>
<dbReference type="Proteomes" id="UP000000589">
    <property type="component" value="Chromosome 16"/>
</dbReference>
<dbReference type="RNAct" id="Q9JLB9">
    <property type="molecule type" value="protein"/>
</dbReference>
<dbReference type="Bgee" id="ENSMUSG00000022656">
    <property type="expression patterns" value="Expressed in seminiferous tubule of testis and 263 other cell types or tissues"/>
</dbReference>
<dbReference type="ExpressionAtlas" id="Q9JLB9">
    <property type="expression patterns" value="baseline and differential"/>
</dbReference>
<dbReference type="GO" id="GO:0005912">
    <property type="term" value="C:adherens junction"/>
    <property type="evidence" value="ECO:0000314"/>
    <property type="project" value="MGI"/>
</dbReference>
<dbReference type="GO" id="GO:0043296">
    <property type="term" value="C:apical junction complex"/>
    <property type="evidence" value="ECO:0000314"/>
    <property type="project" value="MGI"/>
</dbReference>
<dbReference type="GO" id="GO:0030424">
    <property type="term" value="C:axon"/>
    <property type="evidence" value="ECO:0007669"/>
    <property type="project" value="Ensembl"/>
</dbReference>
<dbReference type="GO" id="GO:0044291">
    <property type="term" value="C:cell-cell contact zone"/>
    <property type="evidence" value="ECO:0000314"/>
    <property type="project" value="MGI"/>
</dbReference>
<dbReference type="GO" id="GO:0005911">
    <property type="term" value="C:cell-cell junction"/>
    <property type="evidence" value="ECO:0000314"/>
    <property type="project" value="ARUK-UCL"/>
</dbReference>
<dbReference type="GO" id="GO:0030425">
    <property type="term" value="C:dendrite"/>
    <property type="evidence" value="ECO:0007669"/>
    <property type="project" value="Ensembl"/>
</dbReference>
<dbReference type="GO" id="GO:0098686">
    <property type="term" value="C:hippocampal mossy fiber to CA3 synapse"/>
    <property type="evidence" value="ECO:0000314"/>
    <property type="project" value="SynGO"/>
</dbReference>
<dbReference type="GO" id="GO:0005886">
    <property type="term" value="C:plasma membrane"/>
    <property type="evidence" value="ECO:0000314"/>
    <property type="project" value="UniProtKB"/>
</dbReference>
<dbReference type="GO" id="GO:0098839">
    <property type="term" value="C:postsynaptic density membrane"/>
    <property type="evidence" value="ECO:0000314"/>
    <property type="project" value="SynGO"/>
</dbReference>
<dbReference type="GO" id="GO:0098631">
    <property type="term" value="F:cell adhesion mediator activity"/>
    <property type="evidence" value="ECO:0000314"/>
    <property type="project" value="UniProtKB"/>
</dbReference>
<dbReference type="GO" id="GO:0042803">
    <property type="term" value="F:protein homodimerization activity"/>
    <property type="evidence" value="ECO:0000353"/>
    <property type="project" value="HGNC-UCL"/>
</dbReference>
<dbReference type="GO" id="GO:0007155">
    <property type="term" value="P:cell adhesion"/>
    <property type="evidence" value="ECO:0000314"/>
    <property type="project" value="MGI"/>
</dbReference>
<dbReference type="GO" id="GO:0098609">
    <property type="term" value="P:cell-cell adhesion"/>
    <property type="evidence" value="ECO:0000314"/>
    <property type="project" value="MGI"/>
</dbReference>
<dbReference type="GO" id="GO:0090103">
    <property type="term" value="P:cochlea morphogenesis"/>
    <property type="evidence" value="ECO:0000314"/>
    <property type="project" value="UniProtKB"/>
</dbReference>
<dbReference type="GO" id="GO:0061951">
    <property type="term" value="P:establishment of protein localization to plasma membrane"/>
    <property type="evidence" value="ECO:0000315"/>
    <property type="project" value="ARUK-UCL"/>
</dbReference>
<dbReference type="GO" id="GO:0009566">
    <property type="term" value="P:fertilization"/>
    <property type="evidence" value="ECO:0000315"/>
    <property type="project" value="MGI"/>
</dbReference>
<dbReference type="GO" id="GO:0007157">
    <property type="term" value="P:heterophilic cell-cell adhesion via plasma membrane cell adhesion molecules"/>
    <property type="evidence" value="ECO:0000314"/>
    <property type="project" value="UniProtKB"/>
</dbReference>
<dbReference type="GO" id="GO:0007156">
    <property type="term" value="P:homophilic cell adhesion via plasma membrane adhesion molecules"/>
    <property type="evidence" value="ECO:0000314"/>
    <property type="project" value="HGNC-UCL"/>
</dbReference>
<dbReference type="GO" id="GO:0002089">
    <property type="term" value="P:lens morphogenesis in camera-type eye"/>
    <property type="evidence" value="ECO:0000315"/>
    <property type="project" value="MGI"/>
</dbReference>
<dbReference type="GO" id="GO:1902414">
    <property type="term" value="P:protein localization to cell junction"/>
    <property type="evidence" value="ECO:0000314"/>
    <property type="project" value="MGI"/>
</dbReference>
<dbReference type="GO" id="GO:0150052">
    <property type="term" value="P:regulation of postsynapse assembly"/>
    <property type="evidence" value="ECO:0000314"/>
    <property type="project" value="SynGO"/>
</dbReference>
<dbReference type="GO" id="GO:0060042">
    <property type="term" value="P:retina morphogenesis in camera-type eye"/>
    <property type="evidence" value="ECO:0000315"/>
    <property type="project" value="MGI"/>
</dbReference>
<dbReference type="GO" id="GO:0046718">
    <property type="term" value="P:symbiont entry into host cell"/>
    <property type="evidence" value="ECO:0007669"/>
    <property type="project" value="InterPro"/>
</dbReference>
<dbReference type="CDD" id="cd07704">
    <property type="entry name" value="IgC1_2_Nectin-3-4_like"/>
    <property type="match status" value="1"/>
</dbReference>
<dbReference type="CDD" id="cd05887">
    <property type="entry name" value="IgV_1_Nectin-3_like"/>
    <property type="match status" value="1"/>
</dbReference>
<dbReference type="CDD" id="cd12087">
    <property type="entry name" value="TM_EGFR-like"/>
    <property type="match status" value="1"/>
</dbReference>
<dbReference type="FunFam" id="2.60.40.10:FF:000298">
    <property type="entry name" value="Nectin cell adhesion molecule 3"/>
    <property type="match status" value="1"/>
</dbReference>
<dbReference type="FunFam" id="2.60.40.10:FF:000378">
    <property type="entry name" value="Nectin cell adhesion molecule 3"/>
    <property type="match status" value="1"/>
</dbReference>
<dbReference type="FunFam" id="2.60.40.10:FF:000511">
    <property type="entry name" value="Nectin cell adhesion molecule 3"/>
    <property type="match status" value="1"/>
</dbReference>
<dbReference type="Gene3D" id="2.60.40.10">
    <property type="entry name" value="Immunoglobulins"/>
    <property type="match status" value="3"/>
</dbReference>
<dbReference type="InterPro" id="IPR013162">
    <property type="entry name" value="CD80_C2-set"/>
</dbReference>
<dbReference type="InterPro" id="IPR007110">
    <property type="entry name" value="Ig-like_dom"/>
</dbReference>
<dbReference type="InterPro" id="IPR036179">
    <property type="entry name" value="Ig-like_dom_sf"/>
</dbReference>
<dbReference type="InterPro" id="IPR013783">
    <property type="entry name" value="Ig-like_fold"/>
</dbReference>
<dbReference type="InterPro" id="IPR003599">
    <property type="entry name" value="Ig_sub"/>
</dbReference>
<dbReference type="InterPro" id="IPR013106">
    <property type="entry name" value="Ig_V-set"/>
</dbReference>
<dbReference type="InterPro" id="IPR033320">
    <property type="entry name" value="IgC1_2_Nectin-3-4-like"/>
</dbReference>
<dbReference type="InterPro" id="IPR033319">
    <property type="entry name" value="Nectin-3_IgV_dom"/>
</dbReference>
<dbReference type="InterPro" id="IPR051427">
    <property type="entry name" value="Nectin/Nectin-like"/>
</dbReference>
<dbReference type="PANTHER" id="PTHR23277:SF12">
    <property type="entry name" value="NECTIN-3"/>
    <property type="match status" value="1"/>
</dbReference>
<dbReference type="PANTHER" id="PTHR23277">
    <property type="entry name" value="NECTIN-RELATED"/>
    <property type="match status" value="1"/>
</dbReference>
<dbReference type="Pfam" id="PF08205">
    <property type="entry name" value="C2-set_2"/>
    <property type="match status" value="1"/>
</dbReference>
<dbReference type="Pfam" id="PF07686">
    <property type="entry name" value="V-set"/>
    <property type="match status" value="1"/>
</dbReference>
<dbReference type="SMART" id="SM00409">
    <property type="entry name" value="IG"/>
    <property type="match status" value="1"/>
</dbReference>
<dbReference type="SUPFAM" id="SSF48726">
    <property type="entry name" value="Immunoglobulin"/>
    <property type="match status" value="3"/>
</dbReference>
<dbReference type="PROSITE" id="PS50835">
    <property type="entry name" value="IG_LIKE"/>
    <property type="match status" value="3"/>
</dbReference>